<name>RLMH_BURA4</name>
<protein>
    <recommendedName>
        <fullName evidence="1">Ribosomal RNA large subunit methyltransferase H</fullName>
        <ecNumber evidence="1">2.1.1.177</ecNumber>
    </recommendedName>
    <alternativeName>
        <fullName evidence="1">23S rRNA (pseudouridine1915-N3)-methyltransferase</fullName>
    </alternativeName>
    <alternativeName>
        <fullName evidence="1">23S rRNA m3Psi1915 methyltransferase</fullName>
    </alternativeName>
    <alternativeName>
        <fullName evidence="1">rRNA (pseudouridine-N3-)-methyltransferase RlmH</fullName>
    </alternativeName>
</protein>
<sequence length="156" mass="17512">MKLFILAVGHKMPGWIASGFDEYTKRMPPELRIELREIKPELRSGGRSAESVMAAERQKIEAALPKGARIVALDERGRDWTTMQLAQALPAWQQDGRDVAFVIGGADGLDPELKARADVLLRISSMTLPHGMVRVLLAEQLYRAWSITQNHPYHRA</sequence>
<proteinExistence type="inferred from homology"/>
<evidence type="ECO:0000255" key="1">
    <source>
        <dbReference type="HAMAP-Rule" id="MF_00658"/>
    </source>
</evidence>
<organism>
    <name type="scientific">Burkholderia ambifaria (strain MC40-6)</name>
    <dbReference type="NCBI Taxonomy" id="398577"/>
    <lineage>
        <taxon>Bacteria</taxon>
        <taxon>Pseudomonadati</taxon>
        <taxon>Pseudomonadota</taxon>
        <taxon>Betaproteobacteria</taxon>
        <taxon>Burkholderiales</taxon>
        <taxon>Burkholderiaceae</taxon>
        <taxon>Burkholderia</taxon>
        <taxon>Burkholderia cepacia complex</taxon>
    </lineage>
</organism>
<accession>B1YU55</accession>
<feature type="chain" id="PRO_0000366569" description="Ribosomal RNA large subunit methyltransferase H">
    <location>
        <begin position="1"/>
        <end position="156"/>
    </location>
</feature>
<feature type="binding site" evidence="1">
    <location>
        <position position="73"/>
    </location>
    <ligand>
        <name>S-adenosyl-L-methionine</name>
        <dbReference type="ChEBI" id="CHEBI:59789"/>
    </ligand>
</feature>
<feature type="binding site" evidence="1">
    <location>
        <position position="104"/>
    </location>
    <ligand>
        <name>S-adenosyl-L-methionine</name>
        <dbReference type="ChEBI" id="CHEBI:59789"/>
    </ligand>
</feature>
<feature type="binding site" evidence="1">
    <location>
        <begin position="123"/>
        <end position="128"/>
    </location>
    <ligand>
        <name>S-adenosyl-L-methionine</name>
        <dbReference type="ChEBI" id="CHEBI:59789"/>
    </ligand>
</feature>
<dbReference type="EC" id="2.1.1.177" evidence="1"/>
<dbReference type="EMBL" id="CP001025">
    <property type="protein sequence ID" value="ACB64695.1"/>
    <property type="molecule type" value="Genomic_DNA"/>
</dbReference>
<dbReference type="RefSeq" id="WP_006761054.1">
    <property type="nucleotide sequence ID" value="NC_010551.1"/>
</dbReference>
<dbReference type="SMR" id="B1YU55"/>
<dbReference type="KEGG" id="bac:BamMC406_2216"/>
<dbReference type="HOGENOM" id="CLU_100552_1_0_4"/>
<dbReference type="OrthoDB" id="9806643at2"/>
<dbReference type="Proteomes" id="UP000001680">
    <property type="component" value="Chromosome 1"/>
</dbReference>
<dbReference type="GO" id="GO:0005737">
    <property type="term" value="C:cytoplasm"/>
    <property type="evidence" value="ECO:0007669"/>
    <property type="project" value="UniProtKB-SubCell"/>
</dbReference>
<dbReference type="GO" id="GO:0070038">
    <property type="term" value="F:rRNA (pseudouridine-N3-)-methyltransferase activity"/>
    <property type="evidence" value="ECO:0007669"/>
    <property type="project" value="UniProtKB-UniRule"/>
</dbReference>
<dbReference type="CDD" id="cd18081">
    <property type="entry name" value="RlmH-like"/>
    <property type="match status" value="1"/>
</dbReference>
<dbReference type="Gene3D" id="3.40.1280.10">
    <property type="match status" value="1"/>
</dbReference>
<dbReference type="HAMAP" id="MF_00658">
    <property type="entry name" value="23SrRNA_methyltr_H"/>
    <property type="match status" value="1"/>
</dbReference>
<dbReference type="InterPro" id="IPR029028">
    <property type="entry name" value="Alpha/beta_knot_MTases"/>
</dbReference>
<dbReference type="InterPro" id="IPR003742">
    <property type="entry name" value="RlmH-like"/>
</dbReference>
<dbReference type="InterPro" id="IPR029026">
    <property type="entry name" value="tRNA_m1G_MTases_N"/>
</dbReference>
<dbReference type="NCBIfam" id="NF000986">
    <property type="entry name" value="PRK00103.1-4"/>
    <property type="match status" value="1"/>
</dbReference>
<dbReference type="NCBIfam" id="TIGR00246">
    <property type="entry name" value="tRNA_RlmH_YbeA"/>
    <property type="match status" value="1"/>
</dbReference>
<dbReference type="PANTHER" id="PTHR33603">
    <property type="entry name" value="METHYLTRANSFERASE"/>
    <property type="match status" value="1"/>
</dbReference>
<dbReference type="PANTHER" id="PTHR33603:SF1">
    <property type="entry name" value="RIBOSOMAL RNA LARGE SUBUNIT METHYLTRANSFERASE H"/>
    <property type="match status" value="1"/>
</dbReference>
<dbReference type="Pfam" id="PF02590">
    <property type="entry name" value="SPOUT_MTase"/>
    <property type="match status" value="1"/>
</dbReference>
<dbReference type="PIRSF" id="PIRSF004505">
    <property type="entry name" value="MT_bac"/>
    <property type="match status" value="1"/>
</dbReference>
<dbReference type="SUPFAM" id="SSF75217">
    <property type="entry name" value="alpha/beta knot"/>
    <property type="match status" value="1"/>
</dbReference>
<comment type="function">
    <text evidence="1">Specifically methylates the pseudouridine at position 1915 (m3Psi1915) in 23S rRNA.</text>
</comment>
<comment type="catalytic activity">
    <reaction evidence="1">
        <text>pseudouridine(1915) in 23S rRNA + S-adenosyl-L-methionine = N(3)-methylpseudouridine(1915) in 23S rRNA + S-adenosyl-L-homocysteine + H(+)</text>
        <dbReference type="Rhea" id="RHEA:42752"/>
        <dbReference type="Rhea" id="RHEA-COMP:10221"/>
        <dbReference type="Rhea" id="RHEA-COMP:10222"/>
        <dbReference type="ChEBI" id="CHEBI:15378"/>
        <dbReference type="ChEBI" id="CHEBI:57856"/>
        <dbReference type="ChEBI" id="CHEBI:59789"/>
        <dbReference type="ChEBI" id="CHEBI:65314"/>
        <dbReference type="ChEBI" id="CHEBI:74486"/>
        <dbReference type="EC" id="2.1.1.177"/>
    </reaction>
</comment>
<comment type="subunit">
    <text evidence="1">Homodimer.</text>
</comment>
<comment type="subcellular location">
    <subcellularLocation>
        <location evidence="1">Cytoplasm</location>
    </subcellularLocation>
</comment>
<comment type="similarity">
    <text evidence="1">Belongs to the RNA methyltransferase RlmH family.</text>
</comment>
<gene>
    <name evidence="1" type="primary">rlmH</name>
    <name type="ordered locus">BamMC406_2216</name>
</gene>
<reference key="1">
    <citation type="submission" date="2008-04" db="EMBL/GenBank/DDBJ databases">
        <title>Complete sequence of chromosome 1 of Burkholderia ambifaria MC40-6.</title>
        <authorList>
            <person name="Copeland A."/>
            <person name="Lucas S."/>
            <person name="Lapidus A."/>
            <person name="Glavina del Rio T."/>
            <person name="Dalin E."/>
            <person name="Tice H."/>
            <person name="Pitluck S."/>
            <person name="Chain P."/>
            <person name="Malfatti S."/>
            <person name="Shin M."/>
            <person name="Vergez L."/>
            <person name="Lang D."/>
            <person name="Schmutz J."/>
            <person name="Larimer F."/>
            <person name="Land M."/>
            <person name="Hauser L."/>
            <person name="Kyrpides N."/>
            <person name="Lykidis A."/>
            <person name="Ramette A."/>
            <person name="Konstantinidis K."/>
            <person name="Tiedje J."/>
            <person name="Richardson P."/>
        </authorList>
    </citation>
    <scope>NUCLEOTIDE SEQUENCE [LARGE SCALE GENOMIC DNA]</scope>
    <source>
        <strain>MC40-6</strain>
    </source>
</reference>
<keyword id="KW-0963">Cytoplasm</keyword>
<keyword id="KW-0489">Methyltransferase</keyword>
<keyword id="KW-0698">rRNA processing</keyword>
<keyword id="KW-0949">S-adenosyl-L-methionine</keyword>
<keyword id="KW-0808">Transferase</keyword>